<organism>
    <name type="scientific">Paramecium octaurelia</name>
    <dbReference type="NCBI Taxonomy" id="43137"/>
    <lineage>
        <taxon>Eukaryota</taxon>
        <taxon>Sar</taxon>
        <taxon>Alveolata</taxon>
        <taxon>Ciliophora</taxon>
        <taxon>Intramacronucleata</taxon>
        <taxon>Oligohymenophorea</taxon>
        <taxon>Peniculida</taxon>
        <taxon>Parameciidae</taxon>
        <taxon>Paramecium</taxon>
    </lineage>
</organism>
<gene>
    <name evidence="8" type="primary">Rab7b</name>
</gene>
<comment type="subcellular location">
    <subcellularLocation>
        <location evidence="5">Cytoplasm</location>
        <location evidence="5">Cytoskeleton</location>
    </subcellularLocation>
    <text evidence="5">Localizes to the oral apparatus where it is associated with microtubules.</text>
</comment>
<comment type="induction">
    <text evidence="5">Expression increases by 55% during phagocytosis (at protein level).</text>
</comment>
<comment type="PTM">
    <text evidence="5">Glycosylated.</text>
</comment>
<comment type="similarity">
    <text evidence="4">Belongs to the small GTPase superfamily. Rab family.</text>
</comment>
<comment type="caution">
    <text evidence="7">Phosphorylation has been demonstrated on peptides which are common to both Rab7a and Rab7b.</text>
</comment>
<sequence>MASQKKQLFKIIILGDSGVGKTSLMNQYVNARFTQQYRATVGADFMAKEVMIDDRMVTLQIWDTAGQERFQSLGGAFYRGADCCVLVYDITNPKSFDSLDSWRDEFLMQGQPKDPEHFPFVVLGNKLDKATERKVQESKSQQWCKSHGNIQFFEVSAKDATNIEQAFQDIAKAAASQEKDEEIFFPTTVTLTKQDPKKQTKQGGCC</sequence>
<proteinExistence type="evidence at protein level"/>
<dbReference type="EMBL" id="AY644723">
    <property type="protein sequence ID" value="AAT66502.1"/>
    <property type="molecule type" value="mRNA"/>
</dbReference>
<dbReference type="EMBL" id="AY875981">
    <property type="protein sequence ID" value="AAW68046.1"/>
    <property type="molecule type" value="Genomic_DNA"/>
</dbReference>
<dbReference type="SMR" id="Q6DUB4"/>
<dbReference type="iPTMnet" id="Q6DUB4"/>
<dbReference type="GO" id="GO:0005737">
    <property type="term" value="C:cytoplasm"/>
    <property type="evidence" value="ECO:0007669"/>
    <property type="project" value="UniProtKB-KW"/>
</dbReference>
<dbReference type="GO" id="GO:0005874">
    <property type="term" value="C:microtubule"/>
    <property type="evidence" value="ECO:0000314"/>
    <property type="project" value="UniProtKB"/>
</dbReference>
<dbReference type="GO" id="GO:0031912">
    <property type="term" value="C:oral apparatus"/>
    <property type="evidence" value="ECO:0000314"/>
    <property type="project" value="UniProtKB"/>
</dbReference>
<dbReference type="GO" id="GO:0005525">
    <property type="term" value="F:GTP binding"/>
    <property type="evidence" value="ECO:0007669"/>
    <property type="project" value="UniProtKB-KW"/>
</dbReference>
<dbReference type="GO" id="GO:0003924">
    <property type="term" value="F:GTPase activity"/>
    <property type="evidence" value="ECO:0007669"/>
    <property type="project" value="InterPro"/>
</dbReference>
<dbReference type="CDD" id="cd01862">
    <property type="entry name" value="Rab7"/>
    <property type="match status" value="1"/>
</dbReference>
<dbReference type="FunFam" id="3.40.50.300:FF:000086">
    <property type="entry name" value="Ras-related small GTPase"/>
    <property type="match status" value="1"/>
</dbReference>
<dbReference type="Gene3D" id="3.40.50.300">
    <property type="entry name" value="P-loop containing nucleotide triphosphate hydrolases"/>
    <property type="match status" value="1"/>
</dbReference>
<dbReference type="InterPro" id="IPR027417">
    <property type="entry name" value="P-loop_NTPase"/>
</dbReference>
<dbReference type="InterPro" id="IPR005225">
    <property type="entry name" value="Small_GTP-bd"/>
</dbReference>
<dbReference type="InterPro" id="IPR001806">
    <property type="entry name" value="Small_GTPase"/>
</dbReference>
<dbReference type="NCBIfam" id="TIGR00231">
    <property type="entry name" value="small_GTP"/>
    <property type="match status" value="1"/>
</dbReference>
<dbReference type="PANTHER" id="PTHR47981">
    <property type="entry name" value="RAB FAMILY"/>
    <property type="match status" value="1"/>
</dbReference>
<dbReference type="PANTHER" id="PTHR47981:SF20">
    <property type="entry name" value="RAS-RELATED PROTEIN RAB-7A"/>
    <property type="match status" value="1"/>
</dbReference>
<dbReference type="Pfam" id="PF00071">
    <property type="entry name" value="Ras"/>
    <property type="match status" value="1"/>
</dbReference>
<dbReference type="PRINTS" id="PR00449">
    <property type="entry name" value="RASTRNSFRMNG"/>
</dbReference>
<dbReference type="SMART" id="SM00175">
    <property type="entry name" value="RAB"/>
    <property type="match status" value="1"/>
</dbReference>
<dbReference type="SMART" id="SM00176">
    <property type="entry name" value="RAN"/>
    <property type="match status" value="1"/>
</dbReference>
<dbReference type="SMART" id="SM00173">
    <property type="entry name" value="RAS"/>
    <property type="match status" value="1"/>
</dbReference>
<dbReference type="SMART" id="SM00174">
    <property type="entry name" value="RHO"/>
    <property type="match status" value="1"/>
</dbReference>
<dbReference type="SUPFAM" id="SSF52540">
    <property type="entry name" value="P-loop containing nucleoside triphosphate hydrolases"/>
    <property type="match status" value="1"/>
</dbReference>
<dbReference type="PROSITE" id="PS51419">
    <property type="entry name" value="RAB"/>
    <property type="match status" value="1"/>
</dbReference>
<feature type="chain" id="PRO_0000421472" description="Ras-related protein Rab-7b">
    <location>
        <begin position="1"/>
        <end position="206"/>
    </location>
</feature>
<feature type="short sequence motif" description="Effector region" evidence="4">
    <location>
        <begin position="37"/>
        <end position="45"/>
    </location>
</feature>
<feature type="binding site" evidence="3">
    <location>
        <begin position="15"/>
        <end position="22"/>
    </location>
    <ligand>
        <name>GTP</name>
        <dbReference type="ChEBI" id="CHEBI:37565"/>
    </ligand>
</feature>
<feature type="binding site" evidence="1">
    <location>
        <begin position="34"/>
        <end position="40"/>
    </location>
    <ligand>
        <name>GTP</name>
        <dbReference type="ChEBI" id="CHEBI:37565"/>
    </ligand>
</feature>
<feature type="binding site" evidence="3">
    <location>
        <begin position="63"/>
        <end position="67"/>
    </location>
    <ligand>
        <name>GTP</name>
        <dbReference type="ChEBI" id="CHEBI:37565"/>
    </ligand>
</feature>
<feature type="binding site" evidence="3">
    <location>
        <begin position="125"/>
        <end position="128"/>
    </location>
    <ligand>
        <name>GTP</name>
        <dbReference type="ChEBI" id="CHEBI:37565"/>
    </ligand>
</feature>
<feature type="binding site" evidence="1">
    <location>
        <begin position="157"/>
        <end position="158"/>
    </location>
    <ligand>
        <name>GTP</name>
        <dbReference type="ChEBI" id="CHEBI:37565"/>
    </ligand>
</feature>
<feature type="modified residue" description="Phosphoserine" evidence="5">
    <location>
        <position position="17"/>
    </location>
</feature>
<feature type="modified residue" description="Phosphoserine" evidence="5">
    <location>
        <position position="23"/>
    </location>
</feature>
<feature type="modified residue" description="Phosphothreonine" evidence="5">
    <location>
        <position position="34"/>
    </location>
</feature>
<feature type="modified residue" description="Phosphothreonine" evidence="5">
    <location>
        <position position="40"/>
    </location>
</feature>
<feature type="modified residue" description="Phosphothreonine" evidence="5">
    <location>
        <position position="64"/>
    </location>
</feature>
<feature type="modified residue" description="Phosphoserine" evidence="5">
    <location>
        <position position="72"/>
    </location>
</feature>
<feature type="modified residue" description="Phosphotyrosine" evidence="5">
    <location>
        <position position="78"/>
    </location>
</feature>
<feature type="modified residue" description="Phosphotyrosine" evidence="5">
    <location>
        <position position="88"/>
    </location>
</feature>
<feature type="lipid moiety-binding region" description="S-geranylgeranyl cysteine" evidence="2">
    <location>
        <position position="205"/>
    </location>
</feature>
<feature type="lipid moiety-binding region" description="S-geranylgeranyl cysteine" evidence="2">
    <location>
        <position position="206"/>
    </location>
</feature>
<protein>
    <recommendedName>
        <fullName evidence="6">Ras-related protein Rab-7b</fullName>
    </recommendedName>
</protein>
<name>RAB7B_PAROT</name>
<accession>Q6DUB4</accession>
<reference evidence="8" key="1">
    <citation type="journal article" date="2006" name="Acta Biochim. Pol.">
        <title>Cloning of two genes encoding Rab7 in Paramecium.</title>
        <authorList>
            <person name="Surmacz L."/>
            <person name="Wiejak J."/>
            <person name="Wyroba E."/>
        </authorList>
    </citation>
    <scope>NUCLEOTIDE SEQUENCE [GENOMIC DNA / MRNA]</scope>
    <source>
        <strain evidence="8">299s</strain>
    </source>
</reference>
<reference evidence="7" key="2">
    <citation type="journal article" date="2011" name="Acta Biochim. Pol.">
        <title>Distinct expression, localization and function of two Rab7 proteins encoded by paralogous genes in a free-living model eukaryote.</title>
        <authorList>
            <person name="Osinska M."/>
            <person name="Wiejak J."/>
            <person name="Wypych E."/>
            <person name="Bilski H."/>
            <person name="Bartosiewicz R."/>
            <person name="Wyroba E."/>
        </authorList>
    </citation>
    <scope>SUBCELLULAR LOCATION</scope>
    <scope>INDUCTION</scope>
    <scope>GLYCOSYLATION</scope>
    <scope>PHOSPHORYLATION AT SER-17; SER-23; THR-34; THR-40; THR-64; SER-72; TYR-78 AND TYR-88</scope>
    <source>
        <strain evidence="5">299s</strain>
    </source>
</reference>
<keyword id="KW-0963">Cytoplasm</keyword>
<keyword id="KW-0206">Cytoskeleton</keyword>
<keyword id="KW-0325">Glycoprotein</keyword>
<keyword id="KW-0342">GTP-binding</keyword>
<keyword id="KW-0449">Lipoprotein</keyword>
<keyword id="KW-0547">Nucleotide-binding</keyword>
<keyword id="KW-0597">Phosphoprotein</keyword>
<keyword id="KW-0636">Prenylation</keyword>
<evidence type="ECO:0000250" key="1"/>
<evidence type="ECO:0000250" key="2">
    <source>
        <dbReference type="UniProtKB" id="P62822"/>
    </source>
</evidence>
<evidence type="ECO:0000250" key="3">
    <source>
        <dbReference type="UniProtKB" id="Q9NRW1"/>
    </source>
</evidence>
<evidence type="ECO:0000255" key="4"/>
<evidence type="ECO:0000269" key="5">
    <source>
    </source>
</evidence>
<evidence type="ECO:0000303" key="6">
    <source>
    </source>
</evidence>
<evidence type="ECO:0000305" key="7"/>
<evidence type="ECO:0000312" key="8">
    <source>
        <dbReference type="EMBL" id="AAT66502.1"/>
    </source>
</evidence>